<reference key="1">
    <citation type="journal article" date="2002" name="Nature">
        <title>The genome sequence of Schizosaccharomyces pombe.</title>
        <authorList>
            <person name="Wood V."/>
            <person name="Gwilliam R."/>
            <person name="Rajandream M.A."/>
            <person name="Lyne M.H."/>
            <person name="Lyne R."/>
            <person name="Stewart A."/>
            <person name="Sgouros J.G."/>
            <person name="Peat N."/>
            <person name="Hayles J."/>
            <person name="Baker S.G."/>
            <person name="Basham D."/>
            <person name="Bowman S."/>
            <person name="Brooks K."/>
            <person name="Brown D."/>
            <person name="Brown S."/>
            <person name="Chillingworth T."/>
            <person name="Churcher C.M."/>
            <person name="Collins M."/>
            <person name="Connor R."/>
            <person name="Cronin A."/>
            <person name="Davis P."/>
            <person name="Feltwell T."/>
            <person name="Fraser A."/>
            <person name="Gentles S."/>
            <person name="Goble A."/>
            <person name="Hamlin N."/>
            <person name="Harris D.E."/>
            <person name="Hidalgo J."/>
            <person name="Hodgson G."/>
            <person name="Holroyd S."/>
            <person name="Hornsby T."/>
            <person name="Howarth S."/>
            <person name="Huckle E.J."/>
            <person name="Hunt S."/>
            <person name="Jagels K."/>
            <person name="James K.D."/>
            <person name="Jones L."/>
            <person name="Jones M."/>
            <person name="Leather S."/>
            <person name="McDonald S."/>
            <person name="McLean J."/>
            <person name="Mooney P."/>
            <person name="Moule S."/>
            <person name="Mungall K.L."/>
            <person name="Murphy L.D."/>
            <person name="Niblett D."/>
            <person name="Odell C."/>
            <person name="Oliver K."/>
            <person name="O'Neil S."/>
            <person name="Pearson D."/>
            <person name="Quail M.A."/>
            <person name="Rabbinowitsch E."/>
            <person name="Rutherford K.M."/>
            <person name="Rutter S."/>
            <person name="Saunders D."/>
            <person name="Seeger K."/>
            <person name="Sharp S."/>
            <person name="Skelton J."/>
            <person name="Simmonds M.N."/>
            <person name="Squares R."/>
            <person name="Squares S."/>
            <person name="Stevens K."/>
            <person name="Taylor K."/>
            <person name="Taylor R.G."/>
            <person name="Tivey A."/>
            <person name="Walsh S.V."/>
            <person name="Warren T."/>
            <person name="Whitehead S."/>
            <person name="Woodward J.R."/>
            <person name="Volckaert G."/>
            <person name="Aert R."/>
            <person name="Robben J."/>
            <person name="Grymonprez B."/>
            <person name="Weltjens I."/>
            <person name="Vanstreels E."/>
            <person name="Rieger M."/>
            <person name="Schaefer M."/>
            <person name="Mueller-Auer S."/>
            <person name="Gabel C."/>
            <person name="Fuchs M."/>
            <person name="Duesterhoeft A."/>
            <person name="Fritzc C."/>
            <person name="Holzer E."/>
            <person name="Moestl D."/>
            <person name="Hilbert H."/>
            <person name="Borzym K."/>
            <person name="Langer I."/>
            <person name="Beck A."/>
            <person name="Lehrach H."/>
            <person name="Reinhardt R."/>
            <person name="Pohl T.M."/>
            <person name="Eger P."/>
            <person name="Zimmermann W."/>
            <person name="Wedler H."/>
            <person name="Wambutt R."/>
            <person name="Purnelle B."/>
            <person name="Goffeau A."/>
            <person name="Cadieu E."/>
            <person name="Dreano S."/>
            <person name="Gloux S."/>
            <person name="Lelaure V."/>
            <person name="Mottier S."/>
            <person name="Galibert F."/>
            <person name="Aves S.J."/>
            <person name="Xiang Z."/>
            <person name="Hunt C."/>
            <person name="Moore K."/>
            <person name="Hurst S.M."/>
            <person name="Lucas M."/>
            <person name="Rochet M."/>
            <person name="Gaillardin C."/>
            <person name="Tallada V.A."/>
            <person name="Garzon A."/>
            <person name="Thode G."/>
            <person name="Daga R.R."/>
            <person name="Cruzado L."/>
            <person name="Jimenez J."/>
            <person name="Sanchez M."/>
            <person name="del Rey F."/>
            <person name="Benito J."/>
            <person name="Dominguez A."/>
            <person name="Revuelta J.L."/>
            <person name="Moreno S."/>
            <person name="Armstrong J."/>
            <person name="Forsburg S.L."/>
            <person name="Cerutti L."/>
            <person name="Lowe T."/>
            <person name="McCombie W.R."/>
            <person name="Paulsen I."/>
            <person name="Potashkin J."/>
            <person name="Shpakovski G.V."/>
            <person name="Ussery D."/>
            <person name="Barrell B.G."/>
            <person name="Nurse P."/>
        </authorList>
    </citation>
    <scope>NUCLEOTIDE SEQUENCE [LARGE SCALE GENOMIC DNA]</scope>
    <source>
        <strain>972 / ATCC 24843</strain>
    </source>
</reference>
<reference key="2">
    <citation type="journal article" date="2006" name="Nat. Biotechnol.">
        <title>ORFeome cloning and global analysis of protein localization in the fission yeast Schizosaccharomyces pombe.</title>
        <authorList>
            <person name="Matsuyama A."/>
            <person name="Arai R."/>
            <person name="Yashiroda Y."/>
            <person name="Shirai A."/>
            <person name="Kamata A."/>
            <person name="Sekido S."/>
            <person name="Kobayashi Y."/>
            <person name="Hashimoto A."/>
            <person name="Hamamoto M."/>
            <person name="Hiraoka Y."/>
            <person name="Horinouchi S."/>
            <person name="Yoshida M."/>
        </authorList>
    </citation>
    <scope>SUBCELLULAR LOCATION [LARGE SCALE ANALYSIS]</scope>
</reference>
<comment type="function">
    <text evidence="1">Thiolesterase that catalyzes the hydrolysis of S-D-lactoylglutathione to form glutathione and D-lactic acid. Involved in the metabolism of methylglyoxal, a toxic compound for yeast proliferation, by converting methylglyoxal to lactate via S-D-lactoylglutathione by sequential enzyme reactions catalyzed by glyoxalase I and glyoxalase II.</text>
</comment>
<comment type="catalytic activity">
    <reaction evidence="1">
        <text>an S-(2-hydroxyacyl)glutathione + H2O = a 2-hydroxy carboxylate + glutathione + H(+)</text>
        <dbReference type="Rhea" id="RHEA:21864"/>
        <dbReference type="ChEBI" id="CHEBI:15377"/>
        <dbReference type="ChEBI" id="CHEBI:15378"/>
        <dbReference type="ChEBI" id="CHEBI:57925"/>
        <dbReference type="ChEBI" id="CHEBI:58896"/>
        <dbReference type="ChEBI" id="CHEBI:71261"/>
        <dbReference type="EC" id="3.1.2.6"/>
    </reaction>
</comment>
<comment type="catalytic activity">
    <reaction evidence="1">
        <text>(R)-S-lactoylglutathione + H2O = (R)-lactate + glutathione + H(+)</text>
        <dbReference type="Rhea" id="RHEA:25245"/>
        <dbReference type="ChEBI" id="CHEBI:15377"/>
        <dbReference type="ChEBI" id="CHEBI:15378"/>
        <dbReference type="ChEBI" id="CHEBI:16004"/>
        <dbReference type="ChEBI" id="CHEBI:57474"/>
        <dbReference type="ChEBI" id="CHEBI:57925"/>
        <dbReference type="EC" id="3.1.2.6"/>
    </reaction>
</comment>
<comment type="cofactor">
    <cofactor evidence="2">
        <name>Zn(2+)</name>
        <dbReference type="ChEBI" id="CHEBI:29105"/>
    </cofactor>
    <text evidence="2">Binds 2 Zn(2+) ions per subunit.</text>
</comment>
<comment type="pathway">
    <text evidence="1">Secondary metabolite metabolism; methylglyoxal degradation; (R)-lactate from methylglyoxal: step 2/2.</text>
</comment>
<comment type="subcellular location">
    <subcellularLocation>
        <location evidence="3">Cytoplasm</location>
    </subcellularLocation>
    <subcellularLocation>
        <location evidence="3">Nucleus</location>
    </subcellularLocation>
</comment>
<comment type="similarity">
    <text evidence="4">Belongs to the metallo-beta-lactamase superfamily. Glyoxalase II family.</text>
</comment>
<dbReference type="EC" id="3.1.2.6" evidence="1"/>
<dbReference type="EMBL" id="CU329672">
    <property type="protein sequence ID" value="CAA21784.1"/>
    <property type="molecule type" value="Genomic_DNA"/>
</dbReference>
<dbReference type="PIR" id="T40964">
    <property type="entry name" value="T40964"/>
</dbReference>
<dbReference type="RefSeq" id="NP_588246.1">
    <property type="nucleotide sequence ID" value="NM_001023236.2"/>
</dbReference>
<dbReference type="SMR" id="O94250"/>
<dbReference type="BioGRID" id="275559">
    <property type="interactions" value="11"/>
</dbReference>
<dbReference type="FunCoup" id="O94250">
    <property type="interactions" value="116"/>
</dbReference>
<dbReference type="STRING" id="284812.O94250"/>
<dbReference type="PaxDb" id="4896-SPCC13B11.03c.1"/>
<dbReference type="EnsemblFungi" id="SPCC13B11.03c.1">
    <property type="protein sequence ID" value="SPCC13B11.03c.1:pep"/>
    <property type="gene ID" value="SPCC13B11.03c"/>
</dbReference>
<dbReference type="KEGG" id="spo:2538985"/>
<dbReference type="PomBase" id="SPCC13B11.03c"/>
<dbReference type="VEuPathDB" id="FungiDB:SPCC13B11.03c"/>
<dbReference type="eggNOG" id="KOG0813">
    <property type="taxonomic scope" value="Eukaryota"/>
</dbReference>
<dbReference type="HOGENOM" id="CLU_030571_4_0_1"/>
<dbReference type="InParanoid" id="O94250"/>
<dbReference type="OMA" id="DTVFTEG"/>
<dbReference type="PhylomeDB" id="O94250"/>
<dbReference type="UniPathway" id="UPA00619">
    <property type="reaction ID" value="UER00676"/>
</dbReference>
<dbReference type="PRO" id="PR:O94250"/>
<dbReference type="Proteomes" id="UP000002485">
    <property type="component" value="Chromosome III"/>
</dbReference>
<dbReference type="GO" id="GO:0005829">
    <property type="term" value="C:cytosol"/>
    <property type="evidence" value="ECO:0007005"/>
    <property type="project" value="PomBase"/>
</dbReference>
<dbReference type="GO" id="GO:0005634">
    <property type="term" value="C:nucleus"/>
    <property type="evidence" value="ECO:0007005"/>
    <property type="project" value="PomBase"/>
</dbReference>
<dbReference type="GO" id="GO:0004416">
    <property type="term" value="F:hydroxyacylglutathione hydrolase activity"/>
    <property type="evidence" value="ECO:0000318"/>
    <property type="project" value="GO_Central"/>
</dbReference>
<dbReference type="GO" id="GO:0046872">
    <property type="term" value="F:metal ion binding"/>
    <property type="evidence" value="ECO:0007669"/>
    <property type="project" value="UniProtKB-KW"/>
</dbReference>
<dbReference type="GO" id="GO:1990748">
    <property type="term" value="P:cellular detoxification"/>
    <property type="evidence" value="ECO:0000305"/>
    <property type="project" value="PomBase"/>
</dbReference>
<dbReference type="GO" id="GO:0019243">
    <property type="term" value="P:methylglyoxal catabolic process to D-lactate via S-lactoyl-glutathione"/>
    <property type="evidence" value="ECO:0000266"/>
    <property type="project" value="PomBase"/>
</dbReference>
<dbReference type="CDD" id="cd07723">
    <property type="entry name" value="hydroxyacylglutathione_hydrolase_MBL-fold"/>
    <property type="match status" value="1"/>
</dbReference>
<dbReference type="FunFam" id="3.60.15.10:FF:000045">
    <property type="entry name" value="Hydroxyacylglutathione hydrolase"/>
    <property type="match status" value="1"/>
</dbReference>
<dbReference type="Gene3D" id="3.60.15.10">
    <property type="entry name" value="Ribonuclease Z/Hydroxyacylglutathione hydrolase-like"/>
    <property type="match status" value="1"/>
</dbReference>
<dbReference type="HAMAP" id="MF_01374">
    <property type="entry name" value="Glyoxalase_2"/>
    <property type="match status" value="1"/>
</dbReference>
<dbReference type="InterPro" id="IPR035680">
    <property type="entry name" value="Clx_II_MBL"/>
</dbReference>
<dbReference type="InterPro" id="IPR032282">
    <property type="entry name" value="HAGH_C"/>
</dbReference>
<dbReference type="InterPro" id="IPR017782">
    <property type="entry name" value="Hydroxyacylglutathione_Hdrlase"/>
</dbReference>
<dbReference type="InterPro" id="IPR001279">
    <property type="entry name" value="Metallo-B-lactamas"/>
</dbReference>
<dbReference type="InterPro" id="IPR036866">
    <property type="entry name" value="RibonucZ/Hydroxyglut_hydro"/>
</dbReference>
<dbReference type="NCBIfam" id="TIGR03413">
    <property type="entry name" value="GSH_gloB"/>
    <property type="match status" value="1"/>
</dbReference>
<dbReference type="PANTHER" id="PTHR11935">
    <property type="entry name" value="BETA LACTAMASE DOMAIN"/>
    <property type="match status" value="1"/>
</dbReference>
<dbReference type="PANTHER" id="PTHR11935:SF94">
    <property type="entry name" value="TENZING NORGAY, ISOFORM C"/>
    <property type="match status" value="1"/>
</dbReference>
<dbReference type="Pfam" id="PF16123">
    <property type="entry name" value="HAGH_C"/>
    <property type="match status" value="1"/>
</dbReference>
<dbReference type="Pfam" id="PF00753">
    <property type="entry name" value="Lactamase_B"/>
    <property type="match status" value="1"/>
</dbReference>
<dbReference type="SMART" id="SM00849">
    <property type="entry name" value="Lactamase_B"/>
    <property type="match status" value="1"/>
</dbReference>
<dbReference type="SUPFAM" id="SSF56281">
    <property type="entry name" value="Metallo-hydrolase/oxidoreductase"/>
    <property type="match status" value="1"/>
</dbReference>
<accession>O94250</accession>
<proteinExistence type="inferred from homology"/>
<protein>
    <recommendedName>
        <fullName evidence="4">Probable hydroxyacylglutathione hydrolase SPCC13B11.03c</fullName>
        <ecNumber evidence="1">3.1.2.6</ecNumber>
    </recommendedName>
    <alternativeName>
        <fullName>Glyoxalase II</fullName>
        <shortName>Glx II</shortName>
    </alternativeName>
</protein>
<feature type="chain" id="PRO_0000337690" description="Probable hydroxyacylglutathione hydrolase SPCC13B11.03c">
    <location>
        <begin position="1"/>
        <end position="256"/>
    </location>
</feature>
<feature type="binding site" evidence="2">
    <location>
        <position position="63"/>
    </location>
    <ligand>
        <name>Zn(2+)</name>
        <dbReference type="ChEBI" id="CHEBI:29105"/>
        <label>1</label>
    </ligand>
</feature>
<feature type="binding site" evidence="2">
    <location>
        <position position="65"/>
    </location>
    <ligand>
        <name>Zn(2+)</name>
        <dbReference type="ChEBI" id="CHEBI:29105"/>
        <label>1</label>
    </ligand>
</feature>
<feature type="binding site" evidence="2">
    <location>
        <position position="67"/>
    </location>
    <ligand>
        <name>Zn(2+)</name>
        <dbReference type="ChEBI" id="CHEBI:29105"/>
        <label>2</label>
    </ligand>
</feature>
<feature type="binding site" evidence="2">
    <location>
        <position position="68"/>
    </location>
    <ligand>
        <name>Zn(2+)</name>
        <dbReference type="ChEBI" id="CHEBI:29105"/>
        <label>2</label>
    </ligand>
</feature>
<feature type="binding site" evidence="2">
    <location>
        <position position="118"/>
    </location>
    <ligand>
        <name>Zn(2+)</name>
        <dbReference type="ChEBI" id="CHEBI:29105"/>
        <label>1</label>
    </ligand>
</feature>
<feature type="binding site" evidence="2">
    <location>
        <position position="139"/>
    </location>
    <ligand>
        <name>Zn(2+)</name>
        <dbReference type="ChEBI" id="CHEBI:29105"/>
        <label>1</label>
    </ligand>
</feature>
<feature type="binding site" evidence="2">
    <location>
        <position position="139"/>
    </location>
    <ligand>
        <name>Zn(2+)</name>
        <dbReference type="ChEBI" id="CHEBI:29105"/>
        <label>2</label>
    </ligand>
</feature>
<feature type="binding site" evidence="2">
    <location>
        <begin position="148"/>
        <end position="150"/>
    </location>
    <ligand>
        <name>substrate</name>
    </ligand>
</feature>
<feature type="binding site" evidence="2">
    <location>
        <begin position="178"/>
        <end position="180"/>
    </location>
    <ligand>
        <name>substrate</name>
    </ligand>
</feature>
<feature type="binding site" evidence="2">
    <location>
        <position position="178"/>
    </location>
    <ligand>
        <name>Zn(2+)</name>
        <dbReference type="ChEBI" id="CHEBI:29105"/>
        <label>2</label>
    </ligand>
</feature>
<feature type="binding site" evidence="2">
    <location>
        <begin position="250"/>
        <end position="253"/>
    </location>
    <ligand>
        <name>substrate</name>
    </ligand>
</feature>
<evidence type="ECO:0000250" key="1">
    <source>
        <dbReference type="UniProtKB" id="Q05584"/>
    </source>
</evidence>
<evidence type="ECO:0000250" key="2">
    <source>
        <dbReference type="UniProtKB" id="Q16775"/>
    </source>
</evidence>
<evidence type="ECO:0000269" key="3">
    <source>
    </source>
</evidence>
<evidence type="ECO:0000305" key="4"/>
<name>GLO22_SCHPO</name>
<organism>
    <name type="scientific">Schizosaccharomyces pombe (strain 972 / ATCC 24843)</name>
    <name type="common">Fission yeast</name>
    <dbReference type="NCBI Taxonomy" id="284812"/>
    <lineage>
        <taxon>Eukaryota</taxon>
        <taxon>Fungi</taxon>
        <taxon>Dikarya</taxon>
        <taxon>Ascomycota</taxon>
        <taxon>Taphrinomycotina</taxon>
        <taxon>Schizosaccharomycetes</taxon>
        <taxon>Schizosaccharomycetales</taxon>
        <taxon>Schizosaccharomycetaceae</taxon>
        <taxon>Schizosaccharomyces</taxon>
    </lineage>
</organism>
<keyword id="KW-0963">Cytoplasm</keyword>
<keyword id="KW-0378">Hydrolase</keyword>
<keyword id="KW-0479">Metal-binding</keyword>
<keyword id="KW-0539">Nucleus</keyword>
<keyword id="KW-1185">Reference proteome</keyword>
<keyword id="KW-0862">Zinc</keyword>
<sequence>MSFQILPIPMWVGTQDNYAYLLLCEETRQAAIVDPAEVNVVMPILKKKLKNKEIDLQAILTTHHHADHSGGNLNLKKEFPHVTIYGGSDQNGVSHVLQDKETLRIGNVQIEALHTPCHTRDSICFYAHSSNEHAVFTGDTLFNAGCGRFFEGTAAEMHIALNAVLSSLPNNTVIYPGHEYTKSNVKFASKHLQSEALNHLEGLCNHNQFIAGHITMGQEKQFNPFMRVTDPELQKHLGLNDPIKVMDELRTLKNQG</sequence>
<gene>
    <name type="ORF">SPCC13B11.03c</name>
</gene>